<evidence type="ECO:0000255" key="1">
    <source>
        <dbReference type="HAMAP-Rule" id="MF_00514"/>
    </source>
</evidence>
<evidence type="ECO:0000256" key="2">
    <source>
        <dbReference type="SAM" id="MobiDB-lite"/>
    </source>
</evidence>
<evidence type="ECO:0000305" key="3"/>
<gene>
    <name evidence="1" type="primary">rpmI</name>
    <name type="ordered locus">BWG_1531</name>
</gene>
<accession>C4ZYH9</accession>
<organism>
    <name type="scientific">Escherichia coli (strain K12 / MC4100 / BW2952)</name>
    <dbReference type="NCBI Taxonomy" id="595496"/>
    <lineage>
        <taxon>Bacteria</taxon>
        <taxon>Pseudomonadati</taxon>
        <taxon>Pseudomonadota</taxon>
        <taxon>Gammaproteobacteria</taxon>
        <taxon>Enterobacterales</taxon>
        <taxon>Enterobacteriaceae</taxon>
        <taxon>Escherichia</taxon>
    </lineage>
</organism>
<name>RL35_ECOBW</name>
<reference key="1">
    <citation type="journal article" date="2009" name="J. Bacteriol.">
        <title>Genomic sequencing reveals regulatory mutations and recombinational events in the widely used MC4100 lineage of Escherichia coli K-12.</title>
        <authorList>
            <person name="Ferenci T."/>
            <person name="Zhou Z."/>
            <person name="Betteridge T."/>
            <person name="Ren Y."/>
            <person name="Liu Y."/>
            <person name="Feng L."/>
            <person name="Reeves P.R."/>
            <person name="Wang L."/>
        </authorList>
    </citation>
    <scope>NUCLEOTIDE SEQUENCE [LARGE SCALE GENOMIC DNA]</scope>
    <source>
        <strain>K12 / MC4100 / BW2952</strain>
    </source>
</reference>
<dbReference type="EMBL" id="CP001396">
    <property type="protein sequence ID" value="ACR61872.1"/>
    <property type="molecule type" value="Genomic_DNA"/>
</dbReference>
<dbReference type="RefSeq" id="WP_001124225.1">
    <property type="nucleotide sequence ID" value="NC_012759.1"/>
</dbReference>
<dbReference type="SMR" id="C4ZYH9"/>
<dbReference type="GeneID" id="97601348"/>
<dbReference type="KEGG" id="ebw:BWG_1531"/>
<dbReference type="HOGENOM" id="CLU_169643_1_1_6"/>
<dbReference type="GO" id="GO:0022625">
    <property type="term" value="C:cytosolic large ribosomal subunit"/>
    <property type="evidence" value="ECO:0007669"/>
    <property type="project" value="TreeGrafter"/>
</dbReference>
<dbReference type="GO" id="GO:0003735">
    <property type="term" value="F:structural constituent of ribosome"/>
    <property type="evidence" value="ECO:0007669"/>
    <property type="project" value="InterPro"/>
</dbReference>
<dbReference type="GO" id="GO:0006412">
    <property type="term" value="P:translation"/>
    <property type="evidence" value="ECO:0007669"/>
    <property type="project" value="UniProtKB-UniRule"/>
</dbReference>
<dbReference type="FunFam" id="4.10.410.60:FF:000001">
    <property type="entry name" value="50S ribosomal protein L35"/>
    <property type="match status" value="1"/>
</dbReference>
<dbReference type="Gene3D" id="4.10.410.60">
    <property type="match status" value="1"/>
</dbReference>
<dbReference type="HAMAP" id="MF_00514">
    <property type="entry name" value="Ribosomal_bL35"/>
    <property type="match status" value="1"/>
</dbReference>
<dbReference type="InterPro" id="IPR001706">
    <property type="entry name" value="Ribosomal_bL35"/>
</dbReference>
<dbReference type="InterPro" id="IPR021137">
    <property type="entry name" value="Ribosomal_bL35-like"/>
</dbReference>
<dbReference type="InterPro" id="IPR018265">
    <property type="entry name" value="Ribosomal_bL35_CS"/>
</dbReference>
<dbReference type="InterPro" id="IPR037229">
    <property type="entry name" value="Ribosomal_bL35_sf"/>
</dbReference>
<dbReference type="NCBIfam" id="TIGR00001">
    <property type="entry name" value="rpmI_bact"/>
    <property type="match status" value="1"/>
</dbReference>
<dbReference type="PANTHER" id="PTHR33343">
    <property type="entry name" value="54S RIBOSOMAL PROTEIN BL35M"/>
    <property type="match status" value="1"/>
</dbReference>
<dbReference type="PANTHER" id="PTHR33343:SF1">
    <property type="entry name" value="LARGE RIBOSOMAL SUBUNIT PROTEIN BL35M"/>
    <property type="match status" value="1"/>
</dbReference>
<dbReference type="Pfam" id="PF01632">
    <property type="entry name" value="Ribosomal_L35p"/>
    <property type="match status" value="1"/>
</dbReference>
<dbReference type="PRINTS" id="PR00064">
    <property type="entry name" value="RIBOSOMALL35"/>
</dbReference>
<dbReference type="SUPFAM" id="SSF143034">
    <property type="entry name" value="L35p-like"/>
    <property type="match status" value="1"/>
</dbReference>
<dbReference type="PROSITE" id="PS00936">
    <property type="entry name" value="RIBOSOMAL_L35"/>
    <property type="match status" value="1"/>
</dbReference>
<protein>
    <recommendedName>
        <fullName evidence="1">Large ribosomal subunit protein bL35</fullName>
    </recommendedName>
    <alternativeName>
        <fullName evidence="3">50S ribosomal protein L35</fullName>
    </alternativeName>
</protein>
<comment type="similarity">
    <text evidence="1">Belongs to the bacterial ribosomal protein bL35 family.</text>
</comment>
<sequence length="65" mass="7289">MPKIKTVRGAAKRFKKTGKGGFKHKHANLRHILTKKATKRKRHLRPKAMVSKGDLGLVIACLPYA</sequence>
<feature type="chain" id="PRO_1000211700" description="Large ribosomal subunit protein bL35">
    <location>
        <begin position="1"/>
        <end position="65"/>
    </location>
</feature>
<feature type="region of interest" description="Disordered" evidence="2">
    <location>
        <begin position="1"/>
        <end position="22"/>
    </location>
</feature>
<feature type="compositionally biased region" description="Basic residues" evidence="2">
    <location>
        <begin position="10"/>
        <end position="22"/>
    </location>
</feature>
<keyword id="KW-0687">Ribonucleoprotein</keyword>
<keyword id="KW-0689">Ribosomal protein</keyword>
<proteinExistence type="inferred from homology"/>